<reference key="1">
    <citation type="journal article" date="2014" name="Mol. Biol. Evol.">
        <title>Clawing through evolution: toxin diversification and convergence in the ancient lineage Chilopoda (centipedes).</title>
        <authorList>
            <person name="Undheim E.A."/>
            <person name="Jones A."/>
            <person name="Clauser K.R."/>
            <person name="Holland J.W."/>
            <person name="Pineda S.S."/>
            <person name="King G.F."/>
            <person name="Fry B.G."/>
        </authorList>
    </citation>
    <scope>NUCLEOTIDE SEQUENCE [MRNA]</scope>
    <scope>NOMENCLATURE</scope>
    <source>
        <tissue>Venom gland</tissue>
    </source>
</reference>
<sequence>MVKPLHCLIGIVLFLAVLNAGNGFTLDRSASIERQEDSWPKISLFHGNQRKKRSEEKRFSDMEQTK</sequence>
<organism>
    <name type="scientific">Ethmostigmus rubripes</name>
    <name type="common">Giant centipede</name>
    <dbReference type="NCBI Taxonomy" id="62613"/>
    <lineage>
        <taxon>Eukaryota</taxon>
        <taxon>Metazoa</taxon>
        <taxon>Ecdysozoa</taxon>
        <taxon>Arthropoda</taxon>
        <taxon>Myriapoda</taxon>
        <taxon>Chilopoda</taxon>
        <taxon>Pleurostigmophora</taxon>
        <taxon>Scolopendromorpha</taxon>
        <taxon>Scolopendridae</taxon>
        <taxon>Ethmostigmus</taxon>
    </lineage>
</organism>
<accession>P0DQG0</accession>
<feature type="signal peptide" evidence="1">
    <location>
        <begin position="1"/>
        <end position="23"/>
    </location>
</feature>
<feature type="chain" id="PRO_0000446837" description="U-scoloptoxin(24)-Er2a" evidence="4">
    <location>
        <begin position="24"/>
        <end position="66"/>
    </location>
</feature>
<feature type="region of interest" description="Disordered" evidence="2">
    <location>
        <begin position="43"/>
        <end position="66"/>
    </location>
</feature>
<feature type="compositionally biased region" description="Basic and acidic residues" evidence="2">
    <location>
        <begin position="53"/>
        <end position="66"/>
    </location>
</feature>
<protein>
    <recommendedName>
        <fullName evidence="3">U-scoloptoxin(24)-Er2a</fullName>
        <shortName evidence="3">U-SLPTX(24)-Er2a</shortName>
    </recommendedName>
</protein>
<name>TXO2A_ETHRU</name>
<proteinExistence type="inferred from homology"/>
<evidence type="ECO:0000255" key="1"/>
<evidence type="ECO:0000256" key="2">
    <source>
        <dbReference type="SAM" id="MobiDB-lite"/>
    </source>
</evidence>
<evidence type="ECO:0000303" key="3">
    <source>
    </source>
</evidence>
<evidence type="ECO:0000305" key="4"/>
<evidence type="ECO:0000305" key="5">
    <source>
    </source>
</evidence>
<keyword id="KW-0964">Secreted</keyword>
<keyword id="KW-0732">Signal</keyword>
<keyword id="KW-0800">Toxin</keyword>
<dbReference type="GO" id="GO:0005576">
    <property type="term" value="C:extracellular region"/>
    <property type="evidence" value="ECO:0007669"/>
    <property type="project" value="UniProtKB-SubCell"/>
</dbReference>
<dbReference type="GO" id="GO:0090729">
    <property type="term" value="F:toxin activity"/>
    <property type="evidence" value="ECO:0007669"/>
    <property type="project" value="UniProtKB-KW"/>
</dbReference>
<comment type="subcellular location">
    <subcellularLocation>
        <location evidence="5">Secreted</location>
    </subcellularLocation>
</comment>
<comment type="tissue specificity">
    <text evidence="5">Expressed by the venom gland.</text>
</comment>
<comment type="similarity">
    <text evidence="4">Belongs to the scoloptoxin-24 family.</text>
</comment>
<comment type="caution">
    <text evidence="5">All E.rubripes family members described in 'Undeheim et al., 2014' have not been imported into UniProtKB. Please, refer to this paper to access them.</text>
</comment>
<comment type="online information" name="National Center for Biotechnology Information (NCBI)">
    <link uri="https://www.ncbi.nlm.nih.gov/nuccore/GASI01000181"/>
</comment>